<organism>
    <name type="scientific">Dictyostelium discoideum</name>
    <name type="common">Social amoeba</name>
    <dbReference type="NCBI Taxonomy" id="44689"/>
    <lineage>
        <taxon>Eukaryota</taxon>
        <taxon>Amoebozoa</taxon>
        <taxon>Evosea</taxon>
        <taxon>Eumycetozoa</taxon>
        <taxon>Dictyostelia</taxon>
        <taxon>Dictyosteliales</taxon>
        <taxon>Dictyosteliaceae</taxon>
        <taxon>Dictyostelium</taxon>
    </lineage>
</organism>
<evidence type="ECO:0000250" key="1"/>
<evidence type="ECO:0000255" key="2"/>
<evidence type="ECO:0000255" key="3">
    <source>
        <dbReference type="PROSITE-ProRule" id="PRU00465"/>
    </source>
</evidence>
<evidence type="ECO:0000255" key="4">
    <source>
        <dbReference type="PROSITE-ProRule" id="PRU00711"/>
    </source>
</evidence>
<evidence type="ECO:0000305" key="5"/>
<dbReference type="EC" id="1.3.5.1"/>
<dbReference type="EMBL" id="AAFI02000005">
    <property type="protein sequence ID" value="EAL72410.1"/>
    <property type="molecule type" value="Genomic_DNA"/>
</dbReference>
<dbReference type="RefSeq" id="XP_646559.1">
    <property type="nucleotide sequence ID" value="XM_641467.1"/>
</dbReference>
<dbReference type="SMR" id="Q55CC2"/>
<dbReference type="FunCoup" id="Q55CC2">
    <property type="interactions" value="521"/>
</dbReference>
<dbReference type="STRING" id="44689.Q55CC2"/>
<dbReference type="PaxDb" id="44689-DDB0231383"/>
<dbReference type="EnsemblProtists" id="EAL72410">
    <property type="protein sequence ID" value="EAL72410"/>
    <property type="gene ID" value="DDB_G0270120"/>
</dbReference>
<dbReference type="GeneID" id="8617527"/>
<dbReference type="KEGG" id="ddi:DDB_G0270120"/>
<dbReference type="dictyBase" id="DDB_G0270120">
    <property type="gene designation" value="sdhB"/>
</dbReference>
<dbReference type="VEuPathDB" id="AmoebaDB:DDB_G0270120"/>
<dbReference type="eggNOG" id="KOG3049">
    <property type="taxonomic scope" value="Eukaryota"/>
</dbReference>
<dbReference type="HOGENOM" id="CLU_044838_0_1_1"/>
<dbReference type="InParanoid" id="Q55CC2"/>
<dbReference type="OMA" id="DGQYFGP"/>
<dbReference type="PhylomeDB" id="Q55CC2"/>
<dbReference type="Reactome" id="R-DDI-71403">
    <property type="pathway name" value="Citric acid cycle (TCA cycle)"/>
</dbReference>
<dbReference type="UniPathway" id="UPA00223">
    <property type="reaction ID" value="UER01006"/>
</dbReference>
<dbReference type="PRO" id="PR:Q55CC2"/>
<dbReference type="Proteomes" id="UP000002195">
    <property type="component" value="Chromosome 1"/>
</dbReference>
<dbReference type="GO" id="GO:0005743">
    <property type="term" value="C:mitochondrial inner membrane"/>
    <property type="evidence" value="ECO:0000250"/>
    <property type="project" value="UniProtKB"/>
</dbReference>
<dbReference type="GO" id="GO:0031966">
    <property type="term" value="C:mitochondrial membrane"/>
    <property type="evidence" value="ECO:0000318"/>
    <property type="project" value="GO_Central"/>
</dbReference>
<dbReference type="GO" id="GO:0045273">
    <property type="term" value="C:respiratory chain complex II (succinate dehydrogenase)"/>
    <property type="evidence" value="ECO:0000250"/>
    <property type="project" value="UniProtKB"/>
</dbReference>
<dbReference type="GO" id="GO:0051537">
    <property type="term" value="F:2 iron, 2 sulfur cluster binding"/>
    <property type="evidence" value="ECO:0000250"/>
    <property type="project" value="UniProtKB"/>
</dbReference>
<dbReference type="GO" id="GO:0051538">
    <property type="term" value="F:3 iron, 4 sulfur cluster binding"/>
    <property type="evidence" value="ECO:0000250"/>
    <property type="project" value="UniProtKB"/>
</dbReference>
<dbReference type="GO" id="GO:0051539">
    <property type="term" value="F:4 iron, 4 sulfur cluster binding"/>
    <property type="evidence" value="ECO:0000250"/>
    <property type="project" value="UniProtKB"/>
</dbReference>
<dbReference type="GO" id="GO:0009055">
    <property type="term" value="F:electron transfer activity"/>
    <property type="evidence" value="ECO:0007669"/>
    <property type="project" value="InterPro"/>
</dbReference>
<dbReference type="GO" id="GO:0046872">
    <property type="term" value="F:metal ion binding"/>
    <property type="evidence" value="ECO:0007669"/>
    <property type="project" value="UniProtKB-KW"/>
</dbReference>
<dbReference type="GO" id="GO:0008177">
    <property type="term" value="F:succinate dehydrogenase (quinone) activity"/>
    <property type="evidence" value="ECO:0007669"/>
    <property type="project" value="UniProtKB-EC"/>
</dbReference>
<dbReference type="GO" id="GO:0048039">
    <property type="term" value="F:ubiquinone binding"/>
    <property type="evidence" value="ECO:0000250"/>
    <property type="project" value="UniProtKB"/>
</dbReference>
<dbReference type="GO" id="GO:0009060">
    <property type="term" value="P:aerobic respiration"/>
    <property type="evidence" value="ECO:0000318"/>
    <property type="project" value="GO_Central"/>
</dbReference>
<dbReference type="GO" id="GO:0022904">
    <property type="term" value="P:respiratory electron transport chain"/>
    <property type="evidence" value="ECO:0000318"/>
    <property type="project" value="GO_Central"/>
</dbReference>
<dbReference type="GO" id="GO:0006099">
    <property type="term" value="P:tricarboxylic acid cycle"/>
    <property type="evidence" value="ECO:0007669"/>
    <property type="project" value="UniProtKB-UniPathway"/>
</dbReference>
<dbReference type="CDD" id="cd00207">
    <property type="entry name" value="fer2"/>
    <property type="match status" value="1"/>
</dbReference>
<dbReference type="FunFam" id="3.10.20.30:FF:000007">
    <property type="entry name" value="Succinate dehydrogenase [ubiquinone] iron-sulfur subunit, mitochondrial"/>
    <property type="match status" value="1"/>
</dbReference>
<dbReference type="FunFam" id="1.10.1060.10:FF:000001">
    <property type="entry name" value="Succinate dehydrogenase iron-sulfur subunit SdhB"/>
    <property type="match status" value="1"/>
</dbReference>
<dbReference type="Gene3D" id="3.10.20.30">
    <property type="match status" value="1"/>
</dbReference>
<dbReference type="Gene3D" id="1.10.1060.10">
    <property type="entry name" value="Alpha-helical ferredoxin"/>
    <property type="match status" value="1"/>
</dbReference>
<dbReference type="InterPro" id="IPR036010">
    <property type="entry name" value="2Fe-2S_ferredoxin-like_sf"/>
</dbReference>
<dbReference type="InterPro" id="IPR001041">
    <property type="entry name" value="2Fe-2S_ferredoxin-type"/>
</dbReference>
<dbReference type="InterPro" id="IPR006058">
    <property type="entry name" value="2Fe2S_fd_BS"/>
</dbReference>
<dbReference type="InterPro" id="IPR017896">
    <property type="entry name" value="4Fe4S_Fe-S-bd"/>
</dbReference>
<dbReference type="InterPro" id="IPR017900">
    <property type="entry name" value="4Fe4S_Fe_S_CS"/>
</dbReference>
<dbReference type="InterPro" id="IPR012675">
    <property type="entry name" value="Beta-grasp_dom_sf"/>
</dbReference>
<dbReference type="InterPro" id="IPR009051">
    <property type="entry name" value="Helical_ferredxn"/>
</dbReference>
<dbReference type="InterPro" id="IPR050573">
    <property type="entry name" value="SDH/FRD_Iron-Sulfur"/>
</dbReference>
<dbReference type="InterPro" id="IPR004489">
    <property type="entry name" value="Succ_DH/fum_Rdtase_Fe-S"/>
</dbReference>
<dbReference type="InterPro" id="IPR025192">
    <property type="entry name" value="Succ_DH/fum_Rdtase_N"/>
</dbReference>
<dbReference type="NCBIfam" id="TIGR00384">
    <property type="entry name" value="dhsB"/>
    <property type="match status" value="1"/>
</dbReference>
<dbReference type="NCBIfam" id="NF004616">
    <property type="entry name" value="PRK05950.1"/>
    <property type="match status" value="1"/>
</dbReference>
<dbReference type="PANTHER" id="PTHR11921:SF29">
    <property type="entry name" value="SUCCINATE DEHYDROGENASE [UBIQUINONE] IRON-SULFUR SUBUNIT, MITOCHONDRIAL"/>
    <property type="match status" value="1"/>
</dbReference>
<dbReference type="PANTHER" id="PTHR11921">
    <property type="entry name" value="SUCCINATE DEHYDROGENASE IRON-SULFUR PROTEIN"/>
    <property type="match status" value="1"/>
</dbReference>
<dbReference type="Pfam" id="PF13085">
    <property type="entry name" value="Fer2_3"/>
    <property type="match status" value="1"/>
</dbReference>
<dbReference type="Pfam" id="PF13183">
    <property type="entry name" value="Fer4_8"/>
    <property type="match status" value="1"/>
</dbReference>
<dbReference type="SUPFAM" id="SSF54292">
    <property type="entry name" value="2Fe-2S ferredoxin-like"/>
    <property type="match status" value="1"/>
</dbReference>
<dbReference type="SUPFAM" id="SSF46548">
    <property type="entry name" value="alpha-helical ferredoxin"/>
    <property type="match status" value="1"/>
</dbReference>
<dbReference type="PROSITE" id="PS00197">
    <property type="entry name" value="2FE2S_FER_1"/>
    <property type="match status" value="1"/>
</dbReference>
<dbReference type="PROSITE" id="PS51085">
    <property type="entry name" value="2FE2S_FER_2"/>
    <property type="match status" value="1"/>
</dbReference>
<dbReference type="PROSITE" id="PS00198">
    <property type="entry name" value="4FE4S_FER_1"/>
    <property type="match status" value="1"/>
</dbReference>
<dbReference type="PROSITE" id="PS51379">
    <property type="entry name" value="4FE4S_FER_2"/>
    <property type="match status" value="1"/>
</dbReference>
<protein>
    <recommendedName>
        <fullName>Succinate dehydrogenase [ubiquinone] iron-sulfur subunit, mitochondrial</fullName>
        <ecNumber>1.3.5.1</ecNumber>
    </recommendedName>
    <alternativeName>
        <fullName>Iron-sulfur subunit of complex II</fullName>
        <shortName>Ip</shortName>
    </alternativeName>
</protein>
<name>SDHB_DICDI</name>
<keyword id="KW-0001">2Fe-2S</keyword>
<keyword id="KW-0003">3Fe-4S</keyword>
<keyword id="KW-0004">4Fe-4S</keyword>
<keyword id="KW-0249">Electron transport</keyword>
<keyword id="KW-0408">Iron</keyword>
<keyword id="KW-0411">Iron-sulfur</keyword>
<keyword id="KW-0472">Membrane</keyword>
<keyword id="KW-0479">Metal-binding</keyword>
<keyword id="KW-0496">Mitochondrion</keyword>
<keyword id="KW-0999">Mitochondrion inner membrane</keyword>
<keyword id="KW-0560">Oxidoreductase</keyword>
<keyword id="KW-1185">Reference proteome</keyword>
<keyword id="KW-0809">Transit peptide</keyword>
<keyword id="KW-0813">Transport</keyword>
<keyword id="KW-0816">Tricarboxylic acid cycle</keyword>
<proteinExistence type="inferred from homology"/>
<gene>
    <name type="primary">sdhB</name>
    <name type="ORF">DDB_G0270120</name>
</gene>
<sequence length="287" mass="32185">MISNVLKRASVLARSNGIQSAFYTTTAKTEASSSPQMKIKTAEKKDHFVNFQVYRYNEETTAKPYIQTYNINLKDCGPMVLDALLLIKNNIDPTLSFRRSCREGICGSCAMNLNGSNTLACTKKITDCLSGDTVKVYPLPHMHVVRDLIPDLSHFYTQHKSIKPWLEPAVDVPRYNGKEILQSKENRHKLDGLYECILCACCSTSCPSYWWSEGGDGGYLGPAVLLQAYRWIADSRDSIQKDRLAILSEDQMKVYKCHTIMNCTAVCPKGLNPGKSIANIKYLLAHN</sequence>
<accession>Q55CC2</accession>
<feature type="transit peptide" description="Mitochondrion" evidence="2">
    <location>
        <begin position="1"/>
        <end position="23"/>
    </location>
</feature>
<feature type="chain" id="PRO_0000327719" description="Succinate dehydrogenase [ubiquinone] iron-sulfur subunit, mitochondrial">
    <location>
        <begin position="24"/>
        <end position="287"/>
    </location>
</feature>
<feature type="domain" description="2Fe-2S ferredoxin-type" evidence="3">
    <location>
        <begin position="51"/>
        <end position="140"/>
    </location>
</feature>
<feature type="domain" description="4Fe-4S ferredoxin-type" evidence="4">
    <location>
        <begin position="186"/>
        <end position="216"/>
    </location>
</feature>
<feature type="binding site" evidence="1">
    <location>
        <position position="101"/>
    </location>
    <ligand>
        <name>[2Fe-2S] cluster</name>
        <dbReference type="ChEBI" id="CHEBI:190135"/>
    </ligand>
</feature>
<feature type="binding site" evidence="1">
    <location>
        <position position="106"/>
    </location>
    <ligand>
        <name>[2Fe-2S] cluster</name>
        <dbReference type="ChEBI" id="CHEBI:190135"/>
    </ligand>
</feature>
<feature type="binding site" evidence="1">
    <location>
        <position position="109"/>
    </location>
    <ligand>
        <name>[2Fe-2S] cluster</name>
        <dbReference type="ChEBI" id="CHEBI:190135"/>
    </ligand>
</feature>
<feature type="binding site" evidence="1">
    <location>
        <position position="121"/>
    </location>
    <ligand>
        <name>[2Fe-2S] cluster</name>
        <dbReference type="ChEBI" id="CHEBI:190135"/>
    </ligand>
</feature>
<feature type="binding site" evidence="1">
    <location>
        <position position="196"/>
    </location>
    <ligand>
        <name>[4Fe-4S] cluster</name>
        <dbReference type="ChEBI" id="CHEBI:49883"/>
    </ligand>
</feature>
<feature type="binding site" evidence="1">
    <location>
        <position position="199"/>
    </location>
    <ligand>
        <name>[4Fe-4S] cluster</name>
        <dbReference type="ChEBI" id="CHEBI:49883"/>
    </ligand>
</feature>
<feature type="binding site" evidence="1">
    <location>
        <position position="202"/>
    </location>
    <ligand>
        <name>[4Fe-4S] cluster</name>
        <dbReference type="ChEBI" id="CHEBI:49883"/>
    </ligand>
</feature>
<feature type="binding site" evidence="1">
    <location>
        <position position="206"/>
    </location>
    <ligand>
        <name>[3Fe-4S] cluster</name>
        <dbReference type="ChEBI" id="CHEBI:21137"/>
    </ligand>
</feature>
<feature type="binding site" evidence="1">
    <location>
        <position position="211"/>
    </location>
    <ligand>
        <name>a ubiquinone</name>
        <dbReference type="ChEBI" id="CHEBI:16389"/>
        <note>ligand shared with DHSD</note>
    </ligand>
</feature>
<feature type="binding site" evidence="1">
    <location>
        <position position="257"/>
    </location>
    <ligand>
        <name>[3Fe-4S] cluster</name>
        <dbReference type="ChEBI" id="CHEBI:21137"/>
    </ligand>
</feature>
<feature type="binding site" evidence="1">
    <location>
        <position position="263"/>
    </location>
    <ligand>
        <name>[3Fe-4S] cluster</name>
        <dbReference type="ChEBI" id="CHEBI:21137"/>
    </ligand>
</feature>
<feature type="binding site" evidence="1">
    <location>
        <position position="267"/>
    </location>
    <ligand>
        <name>[4Fe-4S] cluster</name>
        <dbReference type="ChEBI" id="CHEBI:49883"/>
    </ligand>
</feature>
<reference key="1">
    <citation type="journal article" date="2005" name="Nature">
        <title>The genome of the social amoeba Dictyostelium discoideum.</title>
        <authorList>
            <person name="Eichinger L."/>
            <person name="Pachebat J.A."/>
            <person name="Gloeckner G."/>
            <person name="Rajandream M.A."/>
            <person name="Sucgang R."/>
            <person name="Berriman M."/>
            <person name="Song J."/>
            <person name="Olsen R."/>
            <person name="Szafranski K."/>
            <person name="Xu Q."/>
            <person name="Tunggal B."/>
            <person name="Kummerfeld S."/>
            <person name="Madera M."/>
            <person name="Konfortov B.A."/>
            <person name="Rivero F."/>
            <person name="Bankier A.T."/>
            <person name="Lehmann R."/>
            <person name="Hamlin N."/>
            <person name="Davies R."/>
            <person name="Gaudet P."/>
            <person name="Fey P."/>
            <person name="Pilcher K."/>
            <person name="Chen G."/>
            <person name="Saunders D."/>
            <person name="Sodergren E.J."/>
            <person name="Davis P."/>
            <person name="Kerhornou A."/>
            <person name="Nie X."/>
            <person name="Hall N."/>
            <person name="Anjard C."/>
            <person name="Hemphill L."/>
            <person name="Bason N."/>
            <person name="Farbrother P."/>
            <person name="Desany B."/>
            <person name="Just E."/>
            <person name="Morio T."/>
            <person name="Rost R."/>
            <person name="Churcher C.M."/>
            <person name="Cooper J."/>
            <person name="Haydock S."/>
            <person name="van Driessche N."/>
            <person name="Cronin A."/>
            <person name="Goodhead I."/>
            <person name="Muzny D.M."/>
            <person name="Mourier T."/>
            <person name="Pain A."/>
            <person name="Lu M."/>
            <person name="Harper D."/>
            <person name="Lindsay R."/>
            <person name="Hauser H."/>
            <person name="James K.D."/>
            <person name="Quiles M."/>
            <person name="Madan Babu M."/>
            <person name="Saito T."/>
            <person name="Buchrieser C."/>
            <person name="Wardroper A."/>
            <person name="Felder M."/>
            <person name="Thangavelu M."/>
            <person name="Johnson D."/>
            <person name="Knights A."/>
            <person name="Loulseged H."/>
            <person name="Mungall K.L."/>
            <person name="Oliver K."/>
            <person name="Price C."/>
            <person name="Quail M.A."/>
            <person name="Urushihara H."/>
            <person name="Hernandez J."/>
            <person name="Rabbinowitsch E."/>
            <person name="Steffen D."/>
            <person name="Sanders M."/>
            <person name="Ma J."/>
            <person name="Kohara Y."/>
            <person name="Sharp S."/>
            <person name="Simmonds M.N."/>
            <person name="Spiegler S."/>
            <person name="Tivey A."/>
            <person name="Sugano S."/>
            <person name="White B."/>
            <person name="Walker D."/>
            <person name="Woodward J.R."/>
            <person name="Winckler T."/>
            <person name="Tanaka Y."/>
            <person name="Shaulsky G."/>
            <person name="Schleicher M."/>
            <person name="Weinstock G.M."/>
            <person name="Rosenthal A."/>
            <person name="Cox E.C."/>
            <person name="Chisholm R.L."/>
            <person name="Gibbs R.A."/>
            <person name="Loomis W.F."/>
            <person name="Platzer M."/>
            <person name="Kay R.R."/>
            <person name="Williams J.G."/>
            <person name="Dear P.H."/>
            <person name="Noegel A.A."/>
            <person name="Barrell B.G."/>
            <person name="Kuspa A."/>
        </authorList>
    </citation>
    <scope>NUCLEOTIDE SEQUENCE [LARGE SCALE GENOMIC DNA]</scope>
    <source>
        <strain>AX4</strain>
    </source>
</reference>
<comment type="function">
    <text evidence="1">Iron-sulfur protein (IP) subunit of succinate dehydrogenase (SDH) that is involved in complex II of the mitochondrial electron transport chain and is responsible for transferring electrons from succinate to ubiquinone (coenzyme Q).</text>
</comment>
<comment type="catalytic activity">
    <reaction>
        <text>a quinone + succinate = fumarate + a quinol</text>
        <dbReference type="Rhea" id="RHEA:40523"/>
        <dbReference type="ChEBI" id="CHEBI:24646"/>
        <dbReference type="ChEBI" id="CHEBI:29806"/>
        <dbReference type="ChEBI" id="CHEBI:30031"/>
        <dbReference type="ChEBI" id="CHEBI:132124"/>
        <dbReference type="EC" id="1.3.5.1"/>
    </reaction>
</comment>
<comment type="cofactor">
    <cofactor evidence="1">
        <name>[2Fe-2S] cluster</name>
        <dbReference type="ChEBI" id="CHEBI:190135"/>
    </cofactor>
    <text evidence="1">Binds 1 [2Fe-2S] cluster.</text>
</comment>
<comment type="cofactor">
    <cofactor evidence="1">
        <name>[3Fe-4S] cluster</name>
        <dbReference type="ChEBI" id="CHEBI:21137"/>
    </cofactor>
    <text evidence="1">Binds 1 [3Fe-4S] cluster.</text>
</comment>
<comment type="cofactor">
    <cofactor evidence="1">
        <name>[4Fe-4S] cluster</name>
        <dbReference type="ChEBI" id="CHEBI:49883"/>
    </cofactor>
    <text evidence="1">Binds 1 [4Fe-4S] cluster.</text>
</comment>
<comment type="pathway">
    <text>Carbohydrate metabolism; tricarboxylic acid cycle; fumarate from succinate (eukaryal route): step 1/1.</text>
</comment>
<comment type="subunit">
    <text evidence="1">Component of complex II composed of four subunits: the flavoprotein (FP) SDHA, iron-sulfur protein (IP) SDHB, and a cytochrome b composed of a large and a small subunit.</text>
</comment>
<comment type="subcellular location">
    <subcellularLocation>
        <location evidence="1">Mitochondrion inner membrane</location>
        <topology evidence="1">Peripheral membrane protein</topology>
        <orientation evidence="1">Matrix side</orientation>
    </subcellularLocation>
</comment>
<comment type="similarity">
    <text evidence="5">Belongs to the succinate dehydrogenase/fumarate reductase iron-sulfur protein family.</text>
</comment>